<organism>
    <name type="scientific">Wolbachia sp. subsp. Drosophila simulans (strain wRi)</name>
    <dbReference type="NCBI Taxonomy" id="66084"/>
    <lineage>
        <taxon>Bacteria</taxon>
        <taxon>Pseudomonadati</taxon>
        <taxon>Pseudomonadota</taxon>
        <taxon>Alphaproteobacteria</taxon>
        <taxon>Rickettsiales</taxon>
        <taxon>Anaplasmataceae</taxon>
        <taxon>Wolbachieae</taxon>
        <taxon>Wolbachia</taxon>
    </lineage>
</organism>
<keyword id="KW-0687">Ribonucleoprotein</keyword>
<keyword id="KW-0689">Ribosomal protein</keyword>
<keyword id="KW-0694">RNA-binding</keyword>
<keyword id="KW-0699">rRNA-binding</keyword>
<reference key="1">
    <citation type="journal article" date="2009" name="Proc. Natl. Acad. Sci. U.S.A.">
        <title>The mosaic genome structure of the Wolbachia wRi strain infecting Drosophila simulans.</title>
        <authorList>
            <person name="Klasson L."/>
            <person name="Westberg J."/>
            <person name="Sapountzis P."/>
            <person name="Naeslund K."/>
            <person name="Lutnaes Y."/>
            <person name="Darby A.C."/>
            <person name="Veneti Z."/>
            <person name="Chen L."/>
            <person name="Braig H.R."/>
            <person name="Garrett R."/>
            <person name="Bourtzis K."/>
            <person name="Andersson S.G."/>
        </authorList>
    </citation>
    <scope>NUCLEOTIDE SEQUENCE [LARGE SCALE GENOMIC DNA]</scope>
    <source>
        <strain>wRi</strain>
    </source>
</reference>
<proteinExistence type="inferred from homology"/>
<accession>C0R300</accession>
<name>RS17_WOLWR</name>
<protein>
    <recommendedName>
        <fullName evidence="1">Small ribosomal subunit protein uS17</fullName>
    </recommendedName>
    <alternativeName>
        <fullName evidence="2">30S ribosomal protein S17</fullName>
    </alternativeName>
</protein>
<comment type="function">
    <text evidence="1">One of the primary rRNA binding proteins, it binds specifically to the 5'-end of 16S ribosomal RNA.</text>
</comment>
<comment type="subunit">
    <text evidence="1">Part of the 30S ribosomal subunit.</text>
</comment>
<comment type="similarity">
    <text evidence="1">Belongs to the universal ribosomal protein uS17 family.</text>
</comment>
<dbReference type="EMBL" id="CP001391">
    <property type="protein sequence ID" value="ACN95292.1"/>
    <property type="molecule type" value="Genomic_DNA"/>
</dbReference>
<dbReference type="RefSeq" id="WP_007549925.1">
    <property type="nucleotide sequence ID" value="NZ_MKIF01000201.1"/>
</dbReference>
<dbReference type="SMR" id="C0R300"/>
<dbReference type="STRING" id="66084.WRi_005100"/>
<dbReference type="GeneID" id="70036155"/>
<dbReference type="KEGG" id="wri:WRi_005100"/>
<dbReference type="HOGENOM" id="CLU_073626_1_1_5"/>
<dbReference type="Proteomes" id="UP000001293">
    <property type="component" value="Chromosome"/>
</dbReference>
<dbReference type="GO" id="GO:0022627">
    <property type="term" value="C:cytosolic small ribosomal subunit"/>
    <property type="evidence" value="ECO:0007669"/>
    <property type="project" value="TreeGrafter"/>
</dbReference>
<dbReference type="GO" id="GO:0019843">
    <property type="term" value="F:rRNA binding"/>
    <property type="evidence" value="ECO:0007669"/>
    <property type="project" value="UniProtKB-UniRule"/>
</dbReference>
<dbReference type="GO" id="GO:0003735">
    <property type="term" value="F:structural constituent of ribosome"/>
    <property type="evidence" value="ECO:0007669"/>
    <property type="project" value="InterPro"/>
</dbReference>
<dbReference type="GO" id="GO:0006412">
    <property type="term" value="P:translation"/>
    <property type="evidence" value="ECO:0007669"/>
    <property type="project" value="UniProtKB-UniRule"/>
</dbReference>
<dbReference type="CDD" id="cd00364">
    <property type="entry name" value="Ribosomal_uS17"/>
    <property type="match status" value="1"/>
</dbReference>
<dbReference type="Gene3D" id="2.40.50.140">
    <property type="entry name" value="Nucleic acid-binding proteins"/>
    <property type="match status" value="1"/>
</dbReference>
<dbReference type="HAMAP" id="MF_01345_B">
    <property type="entry name" value="Ribosomal_uS17_B"/>
    <property type="match status" value="1"/>
</dbReference>
<dbReference type="InterPro" id="IPR012340">
    <property type="entry name" value="NA-bd_OB-fold"/>
</dbReference>
<dbReference type="InterPro" id="IPR000266">
    <property type="entry name" value="Ribosomal_uS17"/>
</dbReference>
<dbReference type="InterPro" id="IPR019984">
    <property type="entry name" value="Ribosomal_uS17_bact/chlr"/>
</dbReference>
<dbReference type="InterPro" id="IPR019979">
    <property type="entry name" value="Ribosomal_uS17_CS"/>
</dbReference>
<dbReference type="NCBIfam" id="NF004123">
    <property type="entry name" value="PRK05610.1"/>
    <property type="match status" value="1"/>
</dbReference>
<dbReference type="NCBIfam" id="TIGR03635">
    <property type="entry name" value="uS17_bact"/>
    <property type="match status" value="1"/>
</dbReference>
<dbReference type="PANTHER" id="PTHR10744">
    <property type="entry name" value="40S RIBOSOMAL PROTEIN S11 FAMILY MEMBER"/>
    <property type="match status" value="1"/>
</dbReference>
<dbReference type="PANTHER" id="PTHR10744:SF1">
    <property type="entry name" value="SMALL RIBOSOMAL SUBUNIT PROTEIN US17M"/>
    <property type="match status" value="1"/>
</dbReference>
<dbReference type="Pfam" id="PF00366">
    <property type="entry name" value="Ribosomal_S17"/>
    <property type="match status" value="1"/>
</dbReference>
<dbReference type="PRINTS" id="PR00973">
    <property type="entry name" value="RIBOSOMALS17"/>
</dbReference>
<dbReference type="SUPFAM" id="SSF50249">
    <property type="entry name" value="Nucleic acid-binding proteins"/>
    <property type="match status" value="1"/>
</dbReference>
<dbReference type="PROSITE" id="PS00056">
    <property type="entry name" value="RIBOSOMAL_S17"/>
    <property type="match status" value="1"/>
</dbReference>
<sequence>MPKKVFCGTVTKAKCDKTVKVSVLQVYKDELYKKVIKKYKKYTAHDENNSCKEGDKVLIQEHKPISTTKKWVIVNSSH</sequence>
<feature type="chain" id="PRO_1000166508" description="Small ribosomal subunit protein uS17">
    <location>
        <begin position="1"/>
        <end position="78"/>
    </location>
</feature>
<gene>
    <name evidence="1" type="primary">rpsQ</name>
    <name type="ordered locus">WRi_005100</name>
</gene>
<evidence type="ECO:0000255" key="1">
    <source>
        <dbReference type="HAMAP-Rule" id="MF_01345"/>
    </source>
</evidence>
<evidence type="ECO:0000305" key="2"/>